<dbReference type="EMBL" id="CM002238">
    <property type="protein sequence ID" value="EAA27772.3"/>
    <property type="molecule type" value="Genomic_DNA"/>
</dbReference>
<dbReference type="RefSeq" id="XP_957008.3">
    <property type="nucleotide sequence ID" value="XM_951915.3"/>
</dbReference>
<dbReference type="SMR" id="Q7RY84"/>
<dbReference type="FunCoup" id="Q7RY84">
    <property type="interactions" value="932"/>
</dbReference>
<dbReference type="STRING" id="367110.Q7RY84"/>
<dbReference type="PaxDb" id="5141-EFNCRP00000000108"/>
<dbReference type="EnsemblFungi" id="EAA27772">
    <property type="protein sequence ID" value="EAA27772"/>
    <property type="gene ID" value="NCU00021"/>
</dbReference>
<dbReference type="GeneID" id="3873146"/>
<dbReference type="KEGG" id="ncr:NCU00021"/>
<dbReference type="VEuPathDB" id="FungiDB:NCU00021"/>
<dbReference type="HOGENOM" id="CLU_003256_2_0_1"/>
<dbReference type="InParanoid" id="Q7RY84"/>
<dbReference type="OrthoDB" id="1414216at2759"/>
<dbReference type="Proteomes" id="UP000001805">
    <property type="component" value="Chromosome 3, Linkage Group III"/>
</dbReference>
<dbReference type="GO" id="GO:0005737">
    <property type="term" value="C:cytoplasm"/>
    <property type="evidence" value="ECO:0000318"/>
    <property type="project" value="GO_Central"/>
</dbReference>
<dbReference type="GO" id="GO:0003729">
    <property type="term" value="F:mRNA binding"/>
    <property type="evidence" value="ECO:0000318"/>
    <property type="project" value="GO_Central"/>
</dbReference>
<dbReference type="GO" id="GO:0048312">
    <property type="term" value="P:intracellular distribution of mitochondria"/>
    <property type="evidence" value="ECO:0000318"/>
    <property type="project" value="GO_Central"/>
</dbReference>
<dbReference type="GO" id="GO:0007005">
    <property type="term" value="P:mitochondrion organization"/>
    <property type="evidence" value="ECO:0007669"/>
    <property type="project" value="UniProtKB-UniRule"/>
</dbReference>
<dbReference type="CDD" id="cd15466">
    <property type="entry name" value="CLU-central"/>
    <property type="match status" value="1"/>
</dbReference>
<dbReference type="FunFam" id="1.25.40.10:FF:000293">
    <property type="entry name" value="Clustered mitochondria protein homolog"/>
    <property type="match status" value="1"/>
</dbReference>
<dbReference type="Gene3D" id="1.25.40.10">
    <property type="entry name" value="Tetratricopeptide repeat domain"/>
    <property type="match status" value="1"/>
</dbReference>
<dbReference type="HAMAP" id="MF_03013">
    <property type="entry name" value="CLU"/>
    <property type="match status" value="1"/>
</dbReference>
<dbReference type="InterPro" id="IPR033646">
    <property type="entry name" value="CLU-central"/>
</dbReference>
<dbReference type="InterPro" id="IPR025697">
    <property type="entry name" value="CLU_dom"/>
</dbReference>
<dbReference type="InterPro" id="IPR028275">
    <property type="entry name" value="CLU_N"/>
</dbReference>
<dbReference type="InterPro" id="IPR027523">
    <property type="entry name" value="CLU_prot"/>
</dbReference>
<dbReference type="InterPro" id="IPR023231">
    <property type="entry name" value="GSKIP_dom_sf"/>
</dbReference>
<dbReference type="InterPro" id="IPR011990">
    <property type="entry name" value="TPR-like_helical_dom_sf"/>
</dbReference>
<dbReference type="PANTHER" id="PTHR12601:SF6">
    <property type="entry name" value="CLUSTERED MITOCHONDRIA PROTEIN HOMOLOG"/>
    <property type="match status" value="1"/>
</dbReference>
<dbReference type="PANTHER" id="PTHR12601">
    <property type="entry name" value="EUKARYOTIC TRANSLATION INITIATION FACTOR 3 SUBUNIT EIF-3"/>
    <property type="match status" value="1"/>
</dbReference>
<dbReference type="Pfam" id="PF13236">
    <property type="entry name" value="CLU"/>
    <property type="match status" value="1"/>
</dbReference>
<dbReference type="Pfam" id="PF15044">
    <property type="entry name" value="CLU_N"/>
    <property type="match status" value="1"/>
</dbReference>
<dbReference type="Pfam" id="PF12807">
    <property type="entry name" value="eIF3_p135"/>
    <property type="match status" value="1"/>
</dbReference>
<dbReference type="Pfam" id="PF13424">
    <property type="entry name" value="TPR_12"/>
    <property type="match status" value="2"/>
</dbReference>
<dbReference type="SUPFAM" id="SSF103107">
    <property type="entry name" value="Hypothetical protein c14orf129, hspc210"/>
    <property type="match status" value="1"/>
</dbReference>
<dbReference type="SUPFAM" id="SSF48452">
    <property type="entry name" value="TPR-like"/>
    <property type="match status" value="1"/>
</dbReference>
<dbReference type="PROSITE" id="PS51823">
    <property type="entry name" value="CLU"/>
    <property type="match status" value="1"/>
</dbReference>
<sequence length="1282" mass="142559">MADASQATTPAAEGNPVPEVPETQTPPADVNGTTEQEQTEEGAEQALEDQPFVVTIVLPNTTETLDIPVSPMEQIHEIRQSIIEHPIAIEFSCFHLEFNGKKINDFIQVSDVEGLEHGAQLHLVEDPYTEKEARIHLIRIRELIGASGDRTDTVHGVLAGVSVHDDIVVENPDAPEAEIKEYDFQAPADLAILLPKETGPAPKSIKSISLSPWNPPPAYWRQKGHLLYLVIQTNEGEQHHVTAHVGGFFVNRCSNAKFDPLPKPAPKDCASHSLFTLLKKLSPSFEESFKKFQEFSSQKDPLATFQVGNTIPSAPWLVPSINSSLIAHEADNTRSQETYLLGGAENVDSLRDWNEEFQSAKELPKETIQDRVFRERLLAKLFADYTDAAARGAVLVARGEVAPLNPTEDKDAQIFVYNNIFFSFGADGVGTFTSEGGDEAARVATGKDVLGVKLVNQLDIDGLYTPGTVVIDYLGKRIVGQSIVPGIFKQPEAGENQIHYGAVDGKDIVAADERFAPSFEKLATALRVKKHAVWDKENKRHDLEASVEMKGLLGTDGRKYVLDLYRITPLDIAWMEESGPEGSEYPHRMTVLRPELVEALAKQKTREYVQAELLKRGIIKKPEEKKEGEEATEEAKTEEIKTEEAEKSEEPKAEETEKTEEASESTEVAEKKDEEAAKEDERIDISNFKFALNPDVFSGQVPQTEEEKAEMAQDEQDVRDACTYLRDSVIPALLNDLKESDISFPMDGRSLTRLLHRRGINMRYLGKLATLSEGTRVECFRQLCVREMIARAFKHVAAKYLRYLPLPLTSACLAHLLNCFLGFGLNSSPVAEVDEELRKVFSDADYSFEQVTPENLREAMQQEILHRFRFTLEDGWYNQLQHVQMLREVSQKLGVQIQNKKYAFVATEGEAEPVAEKPVAPAPAPVEDGNKKKKKKKAARETSPVAAAPVATVPHTFSPDDFVNVVPIVKDSTPRSALAEEALEAGRLSIYQNQKKLGEDLLLESLSLHEQIYGLVHPEVAQMYHTLSQLYYQLGQKDAAVELSRKAAIVAERTVGLDSSETVLNYLNLSLFLHQRGDSKEALLYARHALDLWKVIYGPDHPDTITTMNNYAVMLQSIKAYHESRRWFEESLRVCNKVFGEQTVHSATLLFQLAQALALDQDAKKAVDRMRESYNIFKTLLGPEDKNTKEAEHWLTQLTHNAVSVAKATKELQARRAKGSLGFSPRNATAGAAGIGSVVPSAVGVDNRNIDELVKFVENSEKKKGGKKSKGPSNPKKRGGKA</sequence>
<proteinExistence type="inferred from homology"/>
<name>CLU_NEUCR</name>
<comment type="function">
    <text evidence="1">mRNA-binding protein involved in proper cytoplasmic distribution of mitochondria.</text>
</comment>
<comment type="subunit">
    <text evidence="1">May associate with the eukaryotic translation initiation factor 3 (eIF-3) complex.</text>
</comment>
<comment type="subcellular location">
    <subcellularLocation>
        <location evidence="1">Cytoplasm</location>
    </subcellularLocation>
</comment>
<comment type="similarity">
    <text evidence="1">Belongs to the CLU family.</text>
</comment>
<gene>
    <name evidence="1" type="primary">clu1</name>
    <name type="synonym">tif31</name>
    <name type="ORF">NCU00021</name>
    <name type="ORF">NCU20005</name>
</gene>
<feature type="chain" id="PRO_0000366410" description="Clustered mitochondria protein homolog">
    <location>
        <begin position="1"/>
        <end position="1282"/>
    </location>
</feature>
<feature type="domain" description="Clu" evidence="2">
    <location>
        <begin position="331"/>
        <end position="575"/>
    </location>
</feature>
<feature type="repeat" description="TPR 1">
    <location>
        <begin position="1021"/>
        <end position="1054"/>
    </location>
</feature>
<feature type="repeat" description="TPR 2">
    <location>
        <begin position="1063"/>
        <end position="1096"/>
    </location>
</feature>
<feature type="repeat" description="TPR 3">
    <location>
        <begin position="1105"/>
        <end position="1138"/>
    </location>
</feature>
<feature type="region of interest" description="Disordered" evidence="3">
    <location>
        <begin position="1"/>
        <end position="50"/>
    </location>
</feature>
<feature type="region of interest" description="Disordered" evidence="3">
    <location>
        <begin position="624"/>
        <end position="680"/>
    </location>
</feature>
<feature type="region of interest" description="Disordered" evidence="3">
    <location>
        <begin position="913"/>
        <end position="945"/>
    </location>
</feature>
<feature type="region of interest" description="Disordered" evidence="3">
    <location>
        <begin position="1257"/>
        <end position="1282"/>
    </location>
</feature>
<feature type="coiled-coil region" evidence="1">
    <location>
        <begin position="623"/>
        <end position="650"/>
    </location>
</feature>
<feature type="compositionally biased region" description="Low complexity" evidence="3">
    <location>
        <begin position="16"/>
        <end position="36"/>
    </location>
</feature>
<feature type="compositionally biased region" description="Acidic residues" evidence="3">
    <location>
        <begin position="37"/>
        <end position="47"/>
    </location>
</feature>
<feature type="compositionally biased region" description="Basic and acidic residues" evidence="3">
    <location>
        <begin position="624"/>
        <end position="661"/>
    </location>
</feature>
<feature type="compositionally biased region" description="Basic and acidic residues" evidence="3">
    <location>
        <begin position="668"/>
        <end position="680"/>
    </location>
</feature>
<feature type="compositionally biased region" description="Basic residues" evidence="3">
    <location>
        <begin position="1264"/>
        <end position="1282"/>
    </location>
</feature>
<accession>Q7RY84</accession>
<keyword id="KW-0175">Coiled coil</keyword>
<keyword id="KW-0963">Cytoplasm</keyword>
<keyword id="KW-1185">Reference proteome</keyword>
<keyword id="KW-0677">Repeat</keyword>
<keyword id="KW-0802">TPR repeat</keyword>
<protein>
    <recommendedName>
        <fullName evidence="1">Clustered mitochondria protein homolog</fullName>
    </recommendedName>
    <alternativeName>
        <fullName evidence="1">Protein TIF31 homolog</fullName>
    </alternativeName>
</protein>
<reference key="1">
    <citation type="journal article" date="2003" name="Nature">
        <title>The genome sequence of the filamentous fungus Neurospora crassa.</title>
        <authorList>
            <person name="Galagan J.E."/>
            <person name="Calvo S.E."/>
            <person name="Borkovich K.A."/>
            <person name="Selker E.U."/>
            <person name="Read N.D."/>
            <person name="Jaffe D.B."/>
            <person name="FitzHugh W."/>
            <person name="Ma L.-J."/>
            <person name="Smirnov S."/>
            <person name="Purcell S."/>
            <person name="Rehman B."/>
            <person name="Elkins T."/>
            <person name="Engels R."/>
            <person name="Wang S."/>
            <person name="Nielsen C.B."/>
            <person name="Butler J."/>
            <person name="Endrizzi M."/>
            <person name="Qui D."/>
            <person name="Ianakiev P."/>
            <person name="Bell-Pedersen D."/>
            <person name="Nelson M.A."/>
            <person name="Werner-Washburne M."/>
            <person name="Selitrennikoff C.P."/>
            <person name="Kinsey J.A."/>
            <person name="Braun E.L."/>
            <person name="Zelter A."/>
            <person name="Schulte U."/>
            <person name="Kothe G.O."/>
            <person name="Jedd G."/>
            <person name="Mewes H.-W."/>
            <person name="Staben C."/>
            <person name="Marcotte E."/>
            <person name="Greenberg D."/>
            <person name="Roy A."/>
            <person name="Foley K."/>
            <person name="Naylor J."/>
            <person name="Stange-Thomann N."/>
            <person name="Barrett R."/>
            <person name="Gnerre S."/>
            <person name="Kamal M."/>
            <person name="Kamvysselis M."/>
            <person name="Mauceli E.W."/>
            <person name="Bielke C."/>
            <person name="Rudd S."/>
            <person name="Frishman D."/>
            <person name="Krystofova S."/>
            <person name="Rasmussen C."/>
            <person name="Metzenberg R.L."/>
            <person name="Perkins D.D."/>
            <person name="Kroken S."/>
            <person name="Cogoni C."/>
            <person name="Macino G."/>
            <person name="Catcheside D.E.A."/>
            <person name="Li W."/>
            <person name="Pratt R.J."/>
            <person name="Osmani S.A."/>
            <person name="DeSouza C.P.C."/>
            <person name="Glass N.L."/>
            <person name="Orbach M.J."/>
            <person name="Berglund J.A."/>
            <person name="Voelker R."/>
            <person name="Yarden O."/>
            <person name="Plamann M."/>
            <person name="Seiler S."/>
            <person name="Dunlap J.C."/>
            <person name="Radford A."/>
            <person name="Aramayo R."/>
            <person name="Natvig D.O."/>
            <person name="Alex L.A."/>
            <person name="Mannhaupt G."/>
            <person name="Ebbole D.J."/>
            <person name="Freitag M."/>
            <person name="Paulsen I."/>
            <person name="Sachs M.S."/>
            <person name="Lander E.S."/>
            <person name="Nusbaum C."/>
            <person name="Birren B.W."/>
        </authorList>
    </citation>
    <scope>NUCLEOTIDE SEQUENCE [LARGE SCALE GENOMIC DNA]</scope>
    <source>
        <strain>ATCC 24698 / 74-OR23-1A / CBS 708.71 / DSM 1257 / FGSC 987</strain>
    </source>
</reference>
<evidence type="ECO:0000255" key="1">
    <source>
        <dbReference type="HAMAP-Rule" id="MF_03013"/>
    </source>
</evidence>
<evidence type="ECO:0000255" key="2">
    <source>
        <dbReference type="PROSITE-ProRule" id="PRU01167"/>
    </source>
</evidence>
<evidence type="ECO:0000256" key="3">
    <source>
        <dbReference type="SAM" id="MobiDB-lite"/>
    </source>
</evidence>
<organism>
    <name type="scientific">Neurospora crassa (strain ATCC 24698 / 74-OR23-1A / CBS 708.71 / DSM 1257 / FGSC 987)</name>
    <dbReference type="NCBI Taxonomy" id="367110"/>
    <lineage>
        <taxon>Eukaryota</taxon>
        <taxon>Fungi</taxon>
        <taxon>Dikarya</taxon>
        <taxon>Ascomycota</taxon>
        <taxon>Pezizomycotina</taxon>
        <taxon>Sordariomycetes</taxon>
        <taxon>Sordariomycetidae</taxon>
        <taxon>Sordariales</taxon>
        <taxon>Sordariaceae</taxon>
        <taxon>Neurospora</taxon>
    </lineage>
</organism>